<proteinExistence type="inferred from homology"/>
<protein>
    <recommendedName>
        <fullName>Probable quinol oxidase subunit 2</fullName>
        <ecNumber>1.10.3.-</ecNumber>
    </recommendedName>
    <alternativeName>
        <fullName>Quinol oxidase polypeptide II</fullName>
    </alternativeName>
</protein>
<accession>Q4L565</accession>
<name>QOX2_STAHJ</name>
<sequence>MSKFKSLLLMFGTLILLSGCSNVEVFNAKGPVASSQKFLIIYSIIFMLVIVAVVLTMFAIFIFKYSYNKNSETGKMHHNSLIETIWFVVPIIIVIALSIPTVKTLYDYEKPPESKEDPMVVYAVSAGYKWFFAYPEQKVETVNTLTIPKNRPVVFKLQAMDTMTSFWIPQLGGQKYAMTGMTMNWTLQADETGTFRGRNSNFNGEGFSRQTFKVHSVDQSEFDSWVKDAKSKKTLSQDEFDKQLLPSTPNKELTFSGTHMAFVDPAADPEYIFYAYKRYNYVQKDPNFVAEKDLYKDVTDKPQKPARKVQITNANYKRHGMKPMILGNNDPYDNEFKKEEDHNSKEMEKISKSAKDENASKFGSKADNDHGGGH</sequence>
<organism>
    <name type="scientific">Staphylococcus haemolyticus (strain JCSC1435)</name>
    <dbReference type="NCBI Taxonomy" id="279808"/>
    <lineage>
        <taxon>Bacteria</taxon>
        <taxon>Bacillati</taxon>
        <taxon>Bacillota</taxon>
        <taxon>Bacilli</taxon>
        <taxon>Bacillales</taxon>
        <taxon>Staphylococcaceae</taxon>
        <taxon>Staphylococcus</taxon>
    </lineage>
</organism>
<dbReference type="EC" id="1.10.3.-"/>
<dbReference type="EMBL" id="AP006716">
    <property type="protein sequence ID" value="BAE05210.1"/>
    <property type="molecule type" value="Genomic_DNA"/>
</dbReference>
<dbReference type="RefSeq" id="WP_011276173.1">
    <property type="nucleotide sequence ID" value="NC_007168.1"/>
</dbReference>
<dbReference type="SMR" id="Q4L565"/>
<dbReference type="GeneID" id="93781265"/>
<dbReference type="KEGG" id="sha:SH1901"/>
<dbReference type="eggNOG" id="COG1622">
    <property type="taxonomic scope" value="Bacteria"/>
</dbReference>
<dbReference type="HOGENOM" id="CLU_036876_6_0_9"/>
<dbReference type="OrthoDB" id="9781261at2"/>
<dbReference type="Proteomes" id="UP000000543">
    <property type="component" value="Chromosome"/>
</dbReference>
<dbReference type="GO" id="GO:0005886">
    <property type="term" value="C:plasma membrane"/>
    <property type="evidence" value="ECO:0007669"/>
    <property type="project" value="UniProtKB-SubCell"/>
</dbReference>
<dbReference type="GO" id="GO:0005507">
    <property type="term" value="F:copper ion binding"/>
    <property type="evidence" value="ECO:0007669"/>
    <property type="project" value="InterPro"/>
</dbReference>
<dbReference type="GO" id="GO:0009486">
    <property type="term" value="F:cytochrome bo3 ubiquinol oxidase activity"/>
    <property type="evidence" value="ECO:0007669"/>
    <property type="project" value="InterPro"/>
</dbReference>
<dbReference type="GO" id="GO:0004129">
    <property type="term" value="F:cytochrome-c oxidase activity"/>
    <property type="evidence" value="ECO:0007669"/>
    <property type="project" value="InterPro"/>
</dbReference>
<dbReference type="GO" id="GO:0016682">
    <property type="term" value="F:oxidoreductase activity, acting on diphenols and related substances as donors, oxygen as acceptor"/>
    <property type="evidence" value="ECO:0007669"/>
    <property type="project" value="InterPro"/>
</dbReference>
<dbReference type="GO" id="GO:0042773">
    <property type="term" value="P:ATP synthesis coupled electron transport"/>
    <property type="evidence" value="ECO:0007669"/>
    <property type="project" value="TreeGrafter"/>
</dbReference>
<dbReference type="CDD" id="cd04212">
    <property type="entry name" value="CuRO_UO_II"/>
    <property type="match status" value="1"/>
</dbReference>
<dbReference type="Gene3D" id="1.10.287.90">
    <property type="match status" value="1"/>
</dbReference>
<dbReference type="Gene3D" id="2.60.40.420">
    <property type="entry name" value="Cupredoxins - blue copper proteins"/>
    <property type="match status" value="1"/>
</dbReference>
<dbReference type="InterPro" id="IPR045187">
    <property type="entry name" value="CcO_II"/>
</dbReference>
<dbReference type="InterPro" id="IPR002429">
    <property type="entry name" value="CcO_II-like_C"/>
</dbReference>
<dbReference type="InterPro" id="IPR008972">
    <property type="entry name" value="Cupredoxin"/>
</dbReference>
<dbReference type="InterPro" id="IPR034227">
    <property type="entry name" value="CuRO_UO_II"/>
</dbReference>
<dbReference type="InterPro" id="IPR011759">
    <property type="entry name" value="Cyt_c_oxidase_su2_TM_dom"/>
</dbReference>
<dbReference type="InterPro" id="IPR036257">
    <property type="entry name" value="Cyt_c_oxidase_su2_TM_sf"/>
</dbReference>
<dbReference type="InterPro" id="IPR006332">
    <property type="entry name" value="QoxA"/>
</dbReference>
<dbReference type="NCBIfam" id="TIGR01432">
    <property type="entry name" value="QOXA"/>
    <property type="match status" value="1"/>
</dbReference>
<dbReference type="PANTHER" id="PTHR22888:SF18">
    <property type="entry name" value="CYTOCHROME BO(3) UBIQUINOL OXIDASE SUBUNIT 2"/>
    <property type="match status" value="1"/>
</dbReference>
<dbReference type="PANTHER" id="PTHR22888">
    <property type="entry name" value="CYTOCHROME C OXIDASE, SUBUNIT II"/>
    <property type="match status" value="1"/>
</dbReference>
<dbReference type="Pfam" id="PF00116">
    <property type="entry name" value="COX2"/>
    <property type="match status" value="1"/>
</dbReference>
<dbReference type="Pfam" id="PF02790">
    <property type="entry name" value="COX2_TM"/>
    <property type="match status" value="1"/>
</dbReference>
<dbReference type="SUPFAM" id="SSF49503">
    <property type="entry name" value="Cupredoxins"/>
    <property type="match status" value="1"/>
</dbReference>
<dbReference type="SUPFAM" id="SSF81464">
    <property type="entry name" value="Cytochrome c oxidase subunit II-like, transmembrane region"/>
    <property type="match status" value="1"/>
</dbReference>
<dbReference type="PROSITE" id="PS50857">
    <property type="entry name" value="COX2_CUA"/>
    <property type="match status" value="1"/>
</dbReference>
<dbReference type="PROSITE" id="PS50999">
    <property type="entry name" value="COX2_TM"/>
    <property type="match status" value="1"/>
</dbReference>
<dbReference type="PROSITE" id="PS51257">
    <property type="entry name" value="PROKAR_LIPOPROTEIN"/>
    <property type="match status" value="1"/>
</dbReference>
<gene>
    <name type="primary">qoxA</name>
    <name type="ordered locus">SH1901</name>
</gene>
<reference key="1">
    <citation type="journal article" date="2005" name="J. Bacteriol.">
        <title>Whole-genome sequencing of Staphylococcus haemolyticus uncovers the extreme plasticity of its genome and the evolution of human-colonizing staphylococcal species.</title>
        <authorList>
            <person name="Takeuchi F."/>
            <person name="Watanabe S."/>
            <person name="Baba T."/>
            <person name="Yuzawa H."/>
            <person name="Ito T."/>
            <person name="Morimoto Y."/>
            <person name="Kuroda M."/>
            <person name="Cui L."/>
            <person name="Takahashi M."/>
            <person name="Ankai A."/>
            <person name="Baba S."/>
            <person name="Fukui S."/>
            <person name="Lee J.C."/>
            <person name="Hiramatsu K."/>
        </authorList>
    </citation>
    <scope>NUCLEOTIDE SEQUENCE [LARGE SCALE GENOMIC DNA]</scope>
    <source>
        <strain>JCSC1435</strain>
    </source>
</reference>
<comment type="function">
    <text evidence="1">Catalyzes quinol oxidation with the concomitant reduction of oxygen to water. Subunit II transfers the electrons from a quinol to the binuclear center of the catalytic subunit I (By similarity).</text>
</comment>
<comment type="catalytic activity">
    <reaction>
        <text>2 a quinol + O2 = 2 a quinone + 2 H2O</text>
        <dbReference type="Rhea" id="RHEA:55376"/>
        <dbReference type="ChEBI" id="CHEBI:15377"/>
        <dbReference type="ChEBI" id="CHEBI:15379"/>
        <dbReference type="ChEBI" id="CHEBI:24646"/>
        <dbReference type="ChEBI" id="CHEBI:132124"/>
    </reaction>
</comment>
<comment type="subcellular location">
    <subcellularLocation>
        <location evidence="3">Cell membrane</location>
        <topology evidence="1">Multi-pass membrane protein</topology>
    </subcellularLocation>
</comment>
<comment type="similarity">
    <text evidence="5">Belongs to the cytochrome c oxidase subunit 2 family.</text>
</comment>
<feature type="signal peptide" evidence="3">
    <location>
        <begin position="1"/>
        <end position="19"/>
    </location>
</feature>
<feature type="chain" id="PRO_0000275882" description="Probable quinol oxidase subunit 2">
    <location>
        <begin position="20"/>
        <end position="374"/>
    </location>
</feature>
<feature type="transmembrane region" description="Helical" evidence="2">
    <location>
        <begin position="43"/>
        <end position="63"/>
    </location>
</feature>
<feature type="transmembrane region" description="Helical" evidence="2">
    <location>
        <begin position="82"/>
        <end position="102"/>
    </location>
</feature>
<feature type="region of interest" description="Disordered" evidence="4">
    <location>
        <begin position="321"/>
        <end position="374"/>
    </location>
</feature>
<feature type="compositionally biased region" description="Basic and acidic residues" evidence="4">
    <location>
        <begin position="334"/>
        <end position="374"/>
    </location>
</feature>
<feature type="lipid moiety-binding region" description="N-palmitoyl cysteine" evidence="3">
    <location>
        <position position="20"/>
    </location>
</feature>
<feature type="lipid moiety-binding region" description="S-diacylglycerol cysteine" evidence="3">
    <location>
        <position position="20"/>
    </location>
</feature>
<keyword id="KW-1003">Cell membrane</keyword>
<keyword id="KW-0249">Electron transport</keyword>
<keyword id="KW-0449">Lipoprotein</keyword>
<keyword id="KW-0472">Membrane</keyword>
<keyword id="KW-0560">Oxidoreductase</keyword>
<keyword id="KW-0564">Palmitate</keyword>
<keyword id="KW-0679">Respiratory chain</keyword>
<keyword id="KW-0732">Signal</keyword>
<keyword id="KW-0812">Transmembrane</keyword>
<keyword id="KW-1133">Transmembrane helix</keyword>
<keyword id="KW-0813">Transport</keyword>
<evidence type="ECO:0000250" key="1"/>
<evidence type="ECO:0000255" key="2"/>
<evidence type="ECO:0000255" key="3">
    <source>
        <dbReference type="PROSITE-ProRule" id="PRU00303"/>
    </source>
</evidence>
<evidence type="ECO:0000256" key="4">
    <source>
        <dbReference type="SAM" id="MobiDB-lite"/>
    </source>
</evidence>
<evidence type="ECO:0000305" key="5"/>